<proteinExistence type="inferred from homology"/>
<sequence>MDNLDPNSSLQVEKLRNRKSRAVWQNNNTTTHNNPYANLSTGEKSRSRHNTGSSYVSPYGGGNGEENAYTGNNNKSNTSGNLLQVPGAGGGGDLNSNKKQSRRMSIHVSARQHGRSFSQTGPIDMANLPALPKIGGVTTSGVGGAGGDVMTRTGGLTIEQKIFKELSQGSAAEVDDYYKTLLKQKNLITRDIKDNINQNQKNILQLTKDLKETQEELIELRGTTKELYEVLGYFKESAQRRLELEFEPETQKELHSPQKSNQLGIPSNKKKDRSSIMVLKKMWDSQLQSLFKHVDGASKFVQPLPNRHIVAESGRWFEVNVGNWKPSYPTHLFIFNDLILIAVKKSSSSSQEPTTGGSNGGSKSRLQAVQCWPLTQVSLQQIKSPKKDDDKMYFINLKSKSLSYVYSTDRYDHFVKVTEAFNKGRNEMIQSERLLDSRLSSPSNNNGDSKEEKRQLRESLRNSGNYKEGVTDDAGGAATGGGRKSAGTPNRNSTDYVLHDISARVHSRNRSQDLGNNFKLANNGKSQFFNEIKTLEDRLDDVDVEISHNQYAEAVELISIIESKLRNIENALTNQRNGGKNVNIADELLLLDVSKLKIKNRKENVSNGLIFDLQHNIAKLKQDDIDNILTLFDNLEQLDRGVQGYLDSMSAYLSTTVSKLIVGLQGSTKIDVVNYLSNLMVINVSIVKRTIQTYEQIIAPILKRHGDVDSSGLINWCIDEFTKLCKQIKKHLYGTLLISSGINMETDEPIYKVKERKLYDNFLKIMQPQLEELKSVGLNVDYIFESILNLE</sequence>
<gene>
    <name type="primary">EXO84</name>
    <name type="ordered locus">CAALFM_C601280WA</name>
    <name type="ORF">CaO19.135</name>
    <name type="ORF">CaO19.7779</name>
</gene>
<evidence type="ECO:0000250" key="1"/>
<evidence type="ECO:0000255" key="2"/>
<evidence type="ECO:0000256" key="3">
    <source>
        <dbReference type="SAM" id="MobiDB-lite"/>
    </source>
</evidence>
<evidence type="ECO:0000305" key="4"/>
<accession>Q59XM1</accession>
<accession>A0A1D8PPK5</accession>
<accession>Q59WR9</accession>
<keyword id="KW-0175">Coiled coil</keyword>
<keyword id="KW-0968">Cytoplasmic vesicle</keyword>
<keyword id="KW-0268">Exocytosis</keyword>
<keyword id="KW-1017">Isopeptide bond</keyword>
<keyword id="KW-0653">Protein transport</keyword>
<keyword id="KW-1185">Reference proteome</keyword>
<keyword id="KW-0813">Transport</keyword>
<keyword id="KW-0832">Ubl conjugation</keyword>
<name>EXO84_CANAL</name>
<reference key="1">
    <citation type="journal article" date="2004" name="Proc. Natl. Acad. Sci. U.S.A.">
        <title>The diploid genome sequence of Candida albicans.</title>
        <authorList>
            <person name="Jones T."/>
            <person name="Federspiel N.A."/>
            <person name="Chibana H."/>
            <person name="Dungan J."/>
            <person name="Kalman S."/>
            <person name="Magee B.B."/>
            <person name="Newport G."/>
            <person name="Thorstenson Y.R."/>
            <person name="Agabian N."/>
            <person name="Magee P.T."/>
            <person name="Davis R.W."/>
            <person name="Scherer S."/>
        </authorList>
    </citation>
    <scope>NUCLEOTIDE SEQUENCE [LARGE SCALE GENOMIC DNA]</scope>
    <source>
        <strain>SC5314 / ATCC MYA-2876</strain>
    </source>
</reference>
<reference key="2">
    <citation type="journal article" date="2007" name="Genome Biol.">
        <title>Assembly of the Candida albicans genome into sixteen supercontigs aligned on the eight chromosomes.</title>
        <authorList>
            <person name="van het Hoog M."/>
            <person name="Rast T.J."/>
            <person name="Martchenko M."/>
            <person name="Grindle S."/>
            <person name="Dignard D."/>
            <person name="Hogues H."/>
            <person name="Cuomo C."/>
            <person name="Berriman M."/>
            <person name="Scherer S."/>
            <person name="Magee B.B."/>
            <person name="Whiteway M."/>
            <person name="Chibana H."/>
            <person name="Nantel A."/>
            <person name="Magee P.T."/>
        </authorList>
    </citation>
    <scope>GENOME REANNOTATION</scope>
    <source>
        <strain>SC5314 / ATCC MYA-2876</strain>
    </source>
</reference>
<reference key="3">
    <citation type="journal article" date="2013" name="Genome Biol.">
        <title>Assembly of a phased diploid Candida albicans genome facilitates allele-specific measurements and provides a simple model for repeat and indel structure.</title>
        <authorList>
            <person name="Muzzey D."/>
            <person name="Schwartz K."/>
            <person name="Weissman J.S."/>
            <person name="Sherlock G."/>
        </authorList>
    </citation>
    <scope>NUCLEOTIDE SEQUENCE [LARGE SCALE GENOMIC DNA]</scope>
    <scope>GENOME REANNOTATION</scope>
    <source>
        <strain>SC5314 / ATCC MYA-2876</strain>
    </source>
</reference>
<comment type="function">
    <text evidence="1">Involved in the secretory pathway as part of the exocyst complex which tethers secretory vesicles to the sites of exocytosis. Plays a role in both the assembly of the exocyst and the polarization of this complex to specific sites of the plasma membrane for exocytosis. Also involved in assembly of the spliceosome (By similarity).</text>
</comment>
<comment type="subunit">
    <text evidence="1">Component of the exocyst complex.</text>
</comment>
<comment type="subcellular location">
    <subcellularLocation>
        <location evidence="1">Cytoplasmic vesicle</location>
        <location evidence="1">Secretory vesicle</location>
    </subcellularLocation>
    <text evidence="1">Cell periphery. The polarization of EXO84 requires actin cables (By similarity).</text>
</comment>
<comment type="similarity">
    <text evidence="4">Belongs to the EXO84 family.</text>
</comment>
<feature type="chain" id="PRO_0000118978" description="Exocyst complex component EXO84">
    <location>
        <begin position="1"/>
        <end position="791"/>
    </location>
</feature>
<feature type="region of interest" description="Disordered" evidence="3">
    <location>
        <begin position="16"/>
        <end position="101"/>
    </location>
</feature>
<feature type="region of interest" description="Disordered" evidence="3">
    <location>
        <begin position="247"/>
        <end position="271"/>
    </location>
</feature>
<feature type="region of interest" description="Disordered" evidence="3">
    <location>
        <begin position="432"/>
        <end position="495"/>
    </location>
</feature>
<feature type="coiled-coil region" evidence="2">
    <location>
        <begin position="190"/>
        <end position="229"/>
    </location>
</feature>
<feature type="coiled-coil region" evidence="2">
    <location>
        <begin position="521"/>
        <end position="577"/>
    </location>
</feature>
<feature type="compositionally biased region" description="Polar residues" evidence="3">
    <location>
        <begin position="23"/>
        <end position="42"/>
    </location>
</feature>
<feature type="compositionally biased region" description="Low complexity" evidence="3">
    <location>
        <begin position="70"/>
        <end position="83"/>
    </location>
</feature>
<feature type="compositionally biased region" description="Basic and acidic residues" evidence="3">
    <location>
        <begin position="247"/>
        <end position="256"/>
    </location>
</feature>
<feature type="compositionally biased region" description="Polar residues" evidence="3">
    <location>
        <begin position="438"/>
        <end position="447"/>
    </location>
</feature>
<feature type="compositionally biased region" description="Basic and acidic residues" evidence="3">
    <location>
        <begin position="448"/>
        <end position="460"/>
    </location>
</feature>
<feature type="cross-link" description="Glycyl lysine isopeptide (Lys-Gly) (interchain with G-Cter in ubiquitin)" evidence="1">
    <location>
        <position position="193"/>
    </location>
</feature>
<protein>
    <recommendedName>
        <fullName>Exocyst complex component EXO84</fullName>
    </recommendedName>
</protein>
<organism>
    <name type="scientific">Candida albicans (strain SC5314 / ATCC MYA-2876)</name>
    <name type="common">Yeast</name>
    <dbReference type="NCBI Taxonomy" id="237561"/>
    <lineage>
        <taxon>Eukaryota</taxon>
        <taxon>Fungi</taxon>
        <taxon>Dikarya</taxon>
        <taxon>Ascomycota</taxon>
        <taxon>Saccharomycotina</taxon>
        <taxon>Pichiomycetes</taxon>
        <taxon>Debaryomycetaceae</taxon>
        <taxon>Candida/Lodderomyces clade</taxon>
        <taxon>Candida</taxon>
    </lineage>
</organism>
<dbReference type="EMBL" id="CP017628">
    <property type="protein sequence ID" value="AOW30069.1"/>
    <property type="molecule type" value="Genomic_DNA"/>
</dbReference>
<dbReference type="RefSeq" id="XP_714341.2">
    <property type="nucleotide sequence ID" value="XM_709248.2"/>
</dbReference>
<dbReference type="BioGRID" id="1227116">
    <property type="interactions" value="3"/>
</dbReference>
<dbReference type="FunCoup" id="Q59XM1">
    <property type="interactions" value="191"/>
</dbReference>
<dbReference type="STRING" id="237561.Q59XM1"/>
<dbReference type="EnsemblFungi" id="C6_01280W_A-T">
    <property type="protein sequence ID" value="C6_01280W_A-T-p1"/>
    <property type="gene ID" value="C6_01280W_A"/>
</dbReference>
<dbReference type="GeneID" id="3644022"/>
<dbReference type="KEGG" id="cal:CAALFM_C601280WA"/>
<dbReference type="CGD" id="CAL0000174176">
    <property type="gene designation" value="EXO84"/>
</dbReference>
<dbReference type="VEuPathDB" id="FungiDB:C6_01280W_A"/>
<dbReference type="HOGENOM" id="CLU_024067_0_0_1"/>
<dbReference type="InParanoid" id="Q59XM1"/>
<dbReference type="OMA" id="TDRYDHF"/>
<dbReference type="OrthoDB" id="642193at2759"/>
<dbReference type="PRO" id="PR:Q59XM1"/>
<dbReference type="Proteomes" id="UP000000559">
    <property type="component" value="Chromosome 6"/>
</dbReference>
<dbReference type="GO" id="GO:0000145">
    <property type="term" value="C:exocyst"/>
    <property type="evidence" value="ECO:0000266"/>
    <property type="project" value="CGD"/>
</dbReference>
<dbReference type="GO" id="GO:0001411">
    <property type="term" value="C:hyphal tip"/>
    <property type="evidence" value="ECO:0000314"/>
    <property type="project" value="CGD"/>
</dbReference>
<dbReference type="GO" id="GO:0030133">
    <property type="term" value="C:transport vesicle"/>
    <property type="evidence" value="ECO:0007669"/>
    <property type="project" value="UniProtKB-SubCell"/>
</dbReference>
<dbReference type="GO" id="GO:0006887">
    <property type="term" value="P:exocytosis"/>
    <property type="evidence" value="ECO:0000266"/>
    <property type="project" value="CGD"/>
</dbReference>
<dbReference type="GO" id="GO:0006893">
    <property type="term" value="P:Golgi to plasma membrane transport"/>
    <property type="evidence" value="ECO:0000318"/>
    <property type="project" value="GO_Central"/>
</dbReference>
<dbReference type="GO" id="GO:0008104">
    <property type="term" value="P:protein localization"/>
    <property type="evidence" value="ECO:0000318"/>
    <property type="project" value="GO_Central"/>
</dbReference>
<dbReference type="GO" id="GO:0015031">
    <property type="term" value="P:protein transport"/>
    <property type="evidence" value="ECO:0007669"/>
    <property type="project" value="UniProtKB-KW"/>
</dbReference>
<dbReference type="FunFam" id="1.20.58.1210:FF:000009">
    <property type="entry name" value="Exocyst complex component EXO84"/>
    <property type="match status" value="1"/>
</dbReference>
<dbReference type="Gene3D" id="1.20.58.1220">
    <property type="entry name" value="Exo84p, C-terminal helical domain"/>
    <property type="match status" value="1"/>
</dbReference>
<dbReference type="Gene3D" id="1.20.58.1210">
    <property type="entry name" value="Exo84p, N-terminal helical domain"/>
    <property type="match status" value="1"/>
</dbReference>
<dbReference type="Gene3D" id="2.30.29.30">
    <property type="entry name" value="Pleckstrin-homology domain (PH domain)/Phosphotyrosine-binding domain (PTB)"/>
    <property type="match status" value="1"/>
</dbReference>
<dbReference type="InterPro" id="IPR016159">
    <property type="entry name" value="Cullin_repeat-like_dom_sf"/>
</dbReference>
<dbReference type="InterPro" id="IPR033961">
    <property type="entry name" value="Exo84"/>
</dbReference>
<dbReference type="InterPro" id="IPR032403">
    <property type="entry name" value="Exo84_C"/>
</dbReference>
<dbReference type="InterPro" id="IPR042561">
    <property type="entry name" value="Exo84_C_1"/>
</dbReference>
<dbReference type="InterPro" id="IPR042560">
    <property type="entry name" value="Exo84_C_2"/>
</dbReference>
<dbReference type="InterPro" id="IPR011993">
    <property type="entry name" value="PH-like_dom_sf"/>
</dbReference>
<dbReference type="PANTHER" id="PTHR21426">
    <property type="entry name" value="EXOCYST COMPLEX COMPONENT 8"/>
    <property type="match status" value="1"/>
</dbReference>
<dbReference type="PANTHER" id="PTHR21426:SF12">
    <property type="entry name" value="EXOCYST COMPLEX COMPONENT 8"/>
    <property type="match status" value="1"/>
</dbReference>
<dbReference type="Pfam" id="PF16528">
    <property type="entry name" value="Exo84_C"/>
    <property type="match status" value="1"/>
</dbReference>
<dbReference type="Pfam" id="PF25345">
    <property type="entry name" value="PH_EXO84"/>
    <property type="match status" value="1"/>
</dbReference>
<dbReference type="SUPFAM" id="SSF74788">
    <property type="entry name" value="Cullin repeat-like"/>
    <property type="match status" value="1"/>
</dbReference>